<proteinExistence type="inferred from homology"/>
<organism>
    <name type="scientific">Burkholderia pseudomallei (strain 668)</name>
    <dbReference type="NCBI Taxonomy" id="320373"/>
    <lineage>
        <taxon>Bacteria</taxon>
        <taxon>Pseudomonadati</taxon>
        <taxon>Pseudomonadota</taxon>
        <taxon>Betaproteobacteria</taxon>
        <taxon>Burkholderiales</taxon>
        <taxon>Burkholderiaceae</taxon>
        <taxon>Burkholderia</taxon>
        <taxon>pseudomallei group</taxon>
    </lineage>
</organism>
<accession>A3NEI0</accession>
<evidence type="ECO:0000255" key="1">
    <source>
        <dbReference type="HAMAP-Rule" id="MF_00508"/>
    </source>
</evidence>
<evidence type="ECO:0000305" key="2"/>
<gene>
    <name evidence="1" type="primary">rpsJ</name>
    <name type="ordered locus">BURPS668_3747</name>
</gene>
<sequence length="103" mass="11828">MQQQKIRIRLKAFDYRLIDQSAAEIVDTAKRTGAIVRGPVPLPTRIQRFDILRSPHVNKTSRDQLEIRTHQRLMDIVDPTDKTVDALMKLDLPAGVDVEIKLQ</sequence>
<keyword id="KW-0687">Ribonucleoprotein</keyword>
<keyword id="KW-0689">Ribosomal protein</keyword>
<name>RS10_BURP6</name>
<comment type="function">
    <text evidence="1">Involved in the binding of tRNA to the ribosomes.</text>
</comment>
<comment type="subunit">
    <text evidence="1">Part of the 30S ribosomal subunit.</text>
</comment>
<comment type="similarity">
    <text evidence="1">Belongs to the universal ribosomal protein uS10 family.</text>
</comment>
<protein>
    <recommendedName>
        <fullName evidence="1">Small ribosomal subunit protein uS10</fullName>
    </recommendedName>
    <alternativeName>
        <fullName evidence="2">30S ribosomal protein S10</fullName>
    </alternativeName>
</protein>
<reference key="1">
    <citation type="journal article" date="2010" name="Genome Biol. Evol.">
        <title>Continuing evolution of Burkholderia mallei through genome reduction and large-scale rearrangements.</title>
        <authorList>
            <person name="Losada L."/>
            <person name="Ronning C.M."/>
            <person name="DeShazer D."/>
            <person name="Woods D."/>
            <person name="Fedorova N."/>
            <person name="Kim H.S."/>
            <person name="Shabalina S.A."/>
            <person name="Pearson T.R."/>
            <person name="Brinkac L."/>
            <person name="Tan P."/>
            <person name="Nandi T."/>
            <person name="Crabtree J."/>
            <person name="Badger J."/>
            <person name="Beckstrom-Sternberg S."/>
            <person name="Saqib M."/>
            <person name="Schutzer S.E."/>
            <person name="Keim P."/>
            <person name="Nierman W.C."/>
        </authorList>
    </citation>
    <scope>NUCLEOTIDE SEQUENCE [LARGE SCALE GENOMIC DNA]</scope>
    <source>
        <strain>668</strain>
    </source>
</reference>
<feature type="chain" id="PRO_1000015001" description="Small ribosomal subunit protein uS10">
    <location>
        <begin position="1"/>
        <end position="103"/>
    </location>
</feature>
<dbReference type="EMBL" id="CP000570">
    <property type="protein sequence ID" value="ABN83036.1"/>
    <property type="molecule type" value="Genomic_DNA"/>
</dbReference>
<dbReference type="RefSeq" id="WP_004199280.1">
    <property type="nucleotide sequence ID" value="NC_009074.1"/>
</dbReference>
<dbReference type="SMR" id="A3NEI0"/>
<dbReference type="GeneID" id="98107161"/>
<dbReference type="KEGG" id="bpd:BURPS668_3747"/>
<dbReference type="HOGENOM" id="CLU_122625_1_3_4"/>
<dbReference type="GO" id="GO:1990904">
    <property type="term" value="C:ribonucleoprotein complex"/>
    <property type="evidence" value="ECO:0007669"/>
    <property type="project" value="UniProtKB-KW"/>
</dbReference>
<dbReference type="GO" id="GO:0005840">
    <property type="term" value="C:ribosome"/>
    <property type="evidence" value="ECO:0007669"/>
    <property type="project" value="UniProtKB-KW"/>
</dbReference>
<dbReference type="GO" id="GO:0003735">
    <property type="term" value="F:structural constituent of ribosome"/>
    <property type="evidence" value="ECO:0007669"/>
    <property type="project" value="InterPro"/>
</dbReference>
<dbReference type="GO" id="GO:0000049">
    <property type="term" value="F:tRNA binding"/>
    <property type="evidence" value="ECO:0007669"/>
    <property type="project" value="UniProtKB-UniRule"/>
</dbReference>
<dbReference type="GO" id="GO:0006412">
    <property type="term" value="P:translation"/>
    <property type="evidence" value="ECO:0007669"/>
    <property type="project" value="UniProtKB-UniRule"/>
</dbReference>
<dbReference type="FunFam" id="3.30.70.600:FF:000001">
    <property type="entry name" value="30S ribosomal protein S10"/>
    <property type="match status" value="1"/>
</dbReference>
<dbReference type="Gene3D" id="3.30.70.600">
    <property type="entry name" value="Ribosomal protein S10 domain"/>
    <property type="match status" value="1"/>
</dbReference>
<dbReference type="HAMAP" id="MF_00508">
    <property type="entry name" value="Ribosomal_uS10"/>
    <property type="match status" value="1"/>
</dbReference>
<dbReference type="InterPro" id="IPR001848">
    <property type="entry name" value="Ribosomal_uS10"/>
</dbReference>
<dbReference type="InterPro" id="IPR018268">
    <property type="entry name" value="Ribosomal_uS10_CS"/>
</dbReference>
<dbReference type="InterPro" id="IPR027486">
    <property type="entry name" value="Ribosomal_uS10_dom"/>
</dbReference>
<dbReference type="InterPro" id="IPR036838">
    <property type="entry name" value="Ribosomal_uS10_dom_sf"/>
</dbReference>
<dbReference type="NCBIfam" id="NF001861">
    <property type="entry name" value="PRK00596.1"/>
    <property type="match status" value="1"/>
</dbReference>
<dbReference type="NCBIfam" id="TIGR01049">
    <property type="entry name" value="rpsJ_bact"/>
    <property type="match status" value="1"/>
</dbReference>
<dbReference type="PANTHER" id="PTHR11700">
    <property type="entry name" value="30S RIBOSOMAL PROTEIN S10 FAMILY MEMBER"/>
    <property type="match status" value="1"/>
</dbReference>
<dbReference type="Pfam" id="PF00338">
    <property type="entry name" value="Ribosomal_S10"/>
    <property type="match status" value="1"/>
</dbReference>
<dbReference type="PRINTS" id="PR00971">
    <property type="entry name" value="RIBOSOMALS10"/>
</dbReference>
<dbReference type="SMART" id="SM01403">
    <property type="entry name" value="Ribosomal_S10"/>
    <property type="match status" value="1"/>
</dbReference>
<dbReference type="SUPFAM" id="SSF54999">
    <property type="entry name" value="Ribosomal protein S10"/>
    <property type="match status" value="1"/>
</dbReference>
<dbReference type="PROSITE" id="PS00361">
    <property type="entry name" value="RIBOSOMAL_S10"/>
    <property type="match status" value="1"/>
</dbReference>